<reference key="1">
    <citation type="submission" date="2001-08" db="EMBL/GenBank/DDBJ databases">
        <title>Cloning and characterization of a gene which is inhibited by serum.</title>
        <authorList>
            <person name="Tan D."/>
            <person name="Lai J."/>
            <person name="Yu M."/>
            <person name="He Y."/>
            <person name="Qian W."/>
            <person name="Jiang Y."/>
        </authorList>
    </citation>
    <scope>NUCLEOTIDE SEQUENCE [MRNA] (ISOFORM 4)</scope>
</reference>
<reference key="2">
    <citation type="submission" date="2000-10" db="EMBL/GenBank/DDBJ databases">
        <title>A novel gene related to testis development (PRTD).</title>
        <authorList>
            <person name="Cheng L.J."/>
            <person name="Li J.M."/>
            <person name="Sha J.H."/>
        </authorList>
    </citation>
    <scope>NUCLEOTIDE SEQUENCE [MRNA] (ISOFORM 6)</scope>
    <source>
        <tissue>Testis</tissue>
    </source>
</reference>
<reference key="3">
    <citation type="journal article" date="2000" name="DNA Res.">
        <title>Prediction of the coding sequences of unidentified human genes. XVI. The complete sequences of 150 new cDNA clones from brain which code for large proteins in vitro.</title>
        <authorList>
            <person name="Nagase T."/>
            <person name="Kikuno R."/>
            <person name="Ishikawa K."/>
            <person name="Hirosawa M."/>
            <person name="Ohara O."/>
        </authorList>
    </citation>
    <scope>NUCLEOTIDE SEQUENCE [LARGE SCALE MRNA] (ISOFORM 2)</scope>
    <source>
        <tissue>Brain</tissue>
    </source>
</reference>
<reference key="4">
    <citation type="journal article" date="2004" name="Nat. Genet.">
        <title>Complete sequencing and characterization of 21,243 full-length human cDNAs.</title>
        <authorList>
            <person name="Ota T."/>
            <person name="Suzuki Y."/>
            <person name="Nishikawa T."/>
            <person name="Otsuki T."/>
            <person name="Sugiyama T."/>
            <person name="Irie R."/>
            <person name="Wakamatsu A."/>
            <person name="Hayashi K."/>
            <person name="Sato H."/>
            <person name="Nagai K."/>
            <person name="Kimura K."/>
            <person name="Makita H."/>
            <person name="Sekine M."/>
            <person name="Obayashi M."/>
            <person name="Nishi T."/>
            <person name="Shibahara T."/>
            <person name="Tanaka T."/>
            <person name="Ishii S."/>
            <person name="Yamamoto J."/>
            <person name="Saito K."/>
            <person name="Kawai Y."/>
            <person name="Isono Y."/>
            <person name="Nakamura Y."/>
            <person name="Nagahari K."/>
            <person name="Murakami K."/>
            <person name="Yasuda T."/>
            <person name="Iwayanagi T."/>
            <person name="Wagatsuma M."/>
            <person name="Shiratori A."/>
            <person name="Sudo H."/>
            <person name="Hosoiri T."/>
            <person name="Kaku Y."/>
            <person name="Kodaira H."/>
            <person name="Kondo H."/>
            <person name="Sugawara M."/>
            <person name="Takahashi M."/>
            <person name="Kanda K."/>
            <person name="Yokoi T."/>
            <person name="Furuya T."/>
            <person name="Kikkawa E."/>
            <person name="Omura Y."/>
            <person name="Abe K."/>
            <person name="Kamihara K."/>
            <person name="Katsuta N."/>
            <person name="Sato K."/>
            <person name="Tanikawa M."/>
            <person name="Yamazaki M."/>
            <person name="Ninomiya K."/>
            <person name="Ishibashi T."/>
            <person name="Yamashita H."/>
            <person name="Murakawa K."/>
            <person name="Fujimori K."/>
            <person name="Tanai H."/>
            <person name="Kimata M."/>
            <person name="Watanabe M."/>
            <person name="Hiraoka S."/>
            <person name="Chiba Y."/>
            <person name="Ishida S."/>
            <person name="Ono Y."/>
            <person name="Takiguchi S."/>
            <person name="Watanabe S."/>
            <person name="Yosida M."/>
            <person name="Hotuta T."/>
            <person name="Kusano J."/>
            <person name="Kanehori K."/>
            <person name="Takahashi-Fujii A."/>
            <person name="Hara H."/>
            <person name="Tanase T.-O."/>
            <person name="Nomura Y."/>
            <person name="Togiya S."/>
            <person name="Komai F."/>
            <person name="Hara R."/>
            <person name="Takeuchi K."/>
            <person name="Arita M."/>
            <person name="Imose N."/>
            <person name="Musashino K."/>
            <person name="Yuuki H."/>
            <person name="Oshima A."/>
            <person name="Sasaki N."/>
            <person name="Aotsuka S."/>
            <person name="Yoshikawa Y."/>
            <person name="Matsunawa H."/>
            <person name="Ichihara T."/>
            <person name="Shiohata N."/>
            <person name="Sano S."/>
            <person name="Moriya S."/>
            <person name="Momiyama H."/>
            <person name="Satoh N."/>
            <person name="Takami S."/>
            <person name="Terashima Y."/>
            <person name="Suzuki O."/>
            <person name="Nakagawa S."/>
            <person name="Senoh A."/>
            <person name="Mizoguchi H."/>
            <person name="Goto Y."/>
            <person name="Shimizu F."/>
            <person name="Wakebe H."/>
            <person name="Hishigaki H."/>
            <person name="Watanabe T."/>
            <person name="Sugiyama A."/>
            <person name="Takemoto M."/>
            <person name="Kawakami B."/>
            <person name="Yamazaki M."/>
            <person name="Watanabe K."/>
            <person name="Kumagai A."/>
            <person name="Itakura S."/>
            <person name="Fukuzumi Y."/>
            <person name="Fujimori Y."/>
            <person name="Komiyama M."/>
            <person name="Tashiro H."/>
            <person name="Tanigami A."/>
            <person name="Fujiwara T."/>
            <person name="Ono T."/>
            <person name="Yamada K."/>
            <person name="Fujii Y."/>
            <person name="Ozaki K."/>
            <person name="Hirao M."/>
            <person name="Ohmori Y."/>
            <person name="Kawabata A."/>
            <person name="Hikiji T."/>
            <person name="Kobatake N."/>
            <person name="Inagaki H."/>
            <person name="Ikema Y."/>
            <person name="Okamoto S."/>
            <person name="Okitani R."/>
            <person name="Kawakami T."/>
            <person name="Noguchi S."/>
            <person name="Itoh T."/>
            <person name="Shigeta K."/>
            <person name="Senba T."/>
            <person name="Matsumura K."/>
            <person name="Nakajima Y."/>
            <person name="Mizuno T."/>
            <person name="Morinaga M."/>
            <person name="Sasaki M."/>
            <person name="Togashi T."/>
            <person name="Oyama M."/>
            <person name="Hata H."/>
            <person name="Watanabe M."/>
            <person name="Komatsu T."/>
            <person name="Mizushima-Sugano J."/>
            <person name="Satoh T."/>
            <person name="Shirai Y."/>
            <person name="Takahashi Y."/>
            <person name="Nakagawa K."/>
            <person name="Okumura K."/>
            <person name="Nagase T."/>
            <person name="Nomura N."/>
            <person name="Kikuchi H."/>
            <person name="Masuho Y."/>
            <person name="Yamashita R."/>
            <person name="Nakai K."/>
            <person name="Yada T."/>
            <person name="Nakamura Y."/>
            <person name="Ohara O."/>
            <person name="Isogai T."/>
            <person name="Sugano S."/>
        </authorList>
    </citation>
    <scope>NUCLEOTIDE SEQUENCE [LARGE SCALE MRNA] (ISOFORMS 5 AND 8)</scope>
    <source>
        <tissue>Embryo</tissue>
        <tissue>Placenta</tissue>
    </source>
</reference>
<reference key="5">
    <citation type="journal article" date="2005" name="Nature">
        <title>Generation and annotation of the DNA sequences of human chromosomes 2 and 4.</title>
        <authorList>
            <person name="Hillier L.W."/>
            <person name="Graves T.A."/>
            <person name="Fulton R.S."/>
            <person name="Fulton L.A."/>
            <person name="Pepin K.H."/>
            <person name="Minx P."/>
            <person name="Wagner-McPherson C."/>
            <person name="Layman D."/>
            <person name="Wylie K."/>
            <person name="Sekhon M."/>
            <person name="Becker M.C."/>
            <person name="Fewell G.A."/>
            <person name="Delehaunty K.D."/>
            <person name="Miner T.L."/>
            <person name="Nash W.E."/>
            <person name="Kremitzki C."/>
            <person name="Oddy L."/>
            <person name="Du H."/>
            <person name="Sun H."/>
            <person name="Bradshaw-Cordum H."/>
            <person name="Ali J."/>
            <person name="Carter J."/>
            <person name="Cordes M."/>
            <person name="Harris A."/>
            <person name="Isak A."/>
            <person name="van Brunt A."/>
            <person name="Nguyen C."/>
            <person name="Du F."/>
            <person name="Courtney L."/>
            <person name="Kalicki J."/>
            <person name="Ozersky P."/>
            <person name="Abbott S."/>
            <person name="Armstrong J."/>
            <person name="Belter E.A."/>
            <person name="Caruso L."/>
            <person name="Cedroni M."/>
            <person name="Cotton M."/>
            <person name="Davidson T."/>
            <person name="Desai A."/>
            <person name="Elliott G."/>
            <person name="Erb T."/>
            <person name="Fronick C."/>
            <person name="Gaige T."/>
            <person name="Haakenson W."/>
            <person name="Haglund K."/>
            <person name="Holmes A."/>
            <person name="Harkins R."/>
            <person name="Kim K."/>
            <person name="Kruchowski S.S."/>
            <person name="Strong C.M."/>
            <person name="Grewal N."/>
            <person name="Goyea E."/>
            <person name="Hou S."/>
            <person name="Levy A."/>
            <person name="Martinka S."/>
            <person name="Mead K."/>
            <person name="McLellan M.D."/>
            <person name="Meyer R."/>
            <person name="Randall-Maher J."/>
            <person name="Tomlinson C."/>
            <person name="Dauphin-Kohlberg S."/>
            <person name="Kozlowicz-Reilly A."/>
            <person name="Shah N."/>
            <person name="Swearengen-Shahid S."/>
            <person name="Snider J."/>
            <person name="Strong J.T."/>
            <person name="Thompson J."/>
            <person name="Yoakum M."/>
            <person name="Leonard S."/>
            <person name="Pearman C."/>
            <person name="Trani L."/>
            <person name="Radionenko M."/>
            <person name="Waligorski J.E."/>
            <person name="Wang C."/>
            <person name="Rock S.M."/>
            <person name="Tin-Wollam A.-M."/>
            <person name="Maupin R."/>
            <person name="Latreille P."/>
            <person name="Wendl M.C."/>
            <person name="Yang S.-P."/>
            <person name="Pohl C."/>
            <person name="Wallis J.W."/>
            <person name="Spieth J."/>
            <person name="Bieri T.A."/>
            <person name="Berkowicz N."/>
            <person name="Nelson J.O."/>
            <person name="Osborne J."/>
            <person name="Ding L."/>
            <person name="Meyer R."/>
            <person name="Sabo A."/>
            <person name="Shotland Y."/>
            <person name="Sinha P."/>
            <person name="Wohldmann P.E."/>
            <person name="Cook L.L."/>
            <person name="Hickenbotham M.T."/>
            <person name="Eldred J."/>
            <person name="Williams D."/>
            <person name="Jones T.A."/>
            <person name="She X."/>
            <person name="Ciccarelli F.D."/>
            <person name="Izaurralde E."/>
            <person name="Taylor J."/>
            <person name="Schmutz J."/>
            <person name="Myers R.M."/>
            <person name="Cox D.R."/>
            <person name="Huang X."/>
            <person name="McPherson J.D."/>
            <person name="Mardis E.R."/>
            <person name="Clifton S.W."/>
            <person name="Warren W.C."/>
            <person name="Chinwalla A.T."/>
            <person name="Eddy S.R."/>
            <person name="Marra M.A."/>
            <person name="Ovcharenko I."/>
            <person name="Furey T.S."/>
            <person name="Miller W."/>
            <person name="Eichler E.E."/>
            <person name="Bork P."/>
            <person name="Suyama M."/>
            <person name="Torrents D."/>
            <person name="Waterston R.H."/>
            <person name="Wilson R.K."/>
        </authorList>
    </citation>
    <scope>NUCLEOTIDE SEQUENCE [LARGE SCALE GENOMIC DNA]</scope>
</reference>
<reference key="6">
    <citation type="submission" date="2005-09" db="EMBL/GenBank/DDBJ databases">
        <authorList>
            <person name="Mural R.J."/>
            <person name="Istrail S."/>
            <person name="Sutton G.G."/>
            <person name="Florea L."/>
            <person name="Halpern A.L."/>
            <person name="Mobarry C.M."/>
            <person name="Lippert R."/>
            <person name="Walenz B."/>
            <person name="Shatkay H."/>
            <person name="Dew I."/>
            <person name="Miller J.R."/>
            <person name="Flanigan M.J."/>
            <person name="Edwards N.J."/>
            <person name="Bolanos R."/>
            <person name="Fasulo D."/>
            <person name="Halldorsson B.V."/>
            <person name="Hannenhalli S."/>
            <person name="Turner R."/>
            <person name="Yooseph S."/>
            <person name="Lu F."/>
            <person name="Nusskern D.R."/>
            <person name="Shue B.C."/>
            <person name="Zheng X.H."/>
            <person name="Zhong F."/>
            <person name="Delcher A.L."/>
            <person name="Huson D.H."/>
            <person name="Kravitz S.A."/>
            <person name="Mouchard L."/>
            <person name="Reinert K."/>
            <person name="Remington K.A."/>
            <person name="Clark A.G."/>
            <person name="Waterman M.S."/>
            <person name="Eichler E.E."/>
            <person name="Adams M.D."/>
            <person name="Hunkapiller M.W."/>
            <person name="Myers E.W."/>
            <person name="Venter J.C."/>
        </authorList>
    </citation>
    <scope>NUCLEOTIDE SEQUENCE [LARGE SCALE GENOMIC DNA]</scope>
</reference>
<reference key="7">
    <citation type="journal article" date="2004" name="Genome Res.">
        <title>The status, quality, and expansion of the NIH full-length cDNA project: the Mammalian Gene Collection (MGC).</title>
        <authorList>
            <consortium name="The MGC Project Team"/>
        </authorList>
    </citation>
    <scope>NUCLEOTIDE SEQUENCE [LARGE SCALE MRNA] (ISOFORMS 3 AND 7)</scope>
    <scope>NUCLEOTIDE SEQUENCE [LARGE SCALE MRNA] OF 75-904 (ISOFORM 1)</scope>
    <source>
        <tissue>Duodenum</tissue>
        <tissue>PNS</tissue>
        <tissue>Uterus</tissue>
    </source>
</reference>
<reference key="8">
    <citation type="journal article" date="2001" name="Genome Res.">
        <title>Towards a catalog of human genes and proteins: sequencing and analysis of 500 novel complete protein coding human cDNAs.</title>
        <authorList>
            <person name="Wiemann S."/>
            <person name="Weil B."/>
            <person name="Wellenreuther R."/>
            <person name="Gassenhuber J."/>
            <person name="Glassl S."/>
            <person name="Ansorge W."/>
            <person name="Boecher M."/>
            <person name="Bloecker H."/>
            <person name="Bauersachs S."/>
            <person name="Blum H."/>
            <person name="Lauber J."/>
            <person name="Duesterhoeft A."/>
            <person name="Beyer A."/>
            <person name="Koehrer K."/>
            <person name="Strack N."/>
            <person name="Mewes H.-W."/>
            <person name="Ottenwaelder B."/>
            <person name="Obermaier B."/>
            <person name="Tampe J."/>
            <person name="Heubner D."/>
            <person name="Wambutt R."/>
            <person name="Korn B."/>
            <person name="Klein M."/>
            <person name="Poustka A."/>
        </authorList>
    </citation>
    <scope>NUCLEOTIDE SEQUENCE [LARGE SCALE MRNA] OF 645-898</scope>
    <source>
        <tissue>Testis</tissue>
    </source>
</reference>
<reference key="9">
    <citation type="journal article" date="2006" name="Mol. Cell">
        <title>Nuclear pore components are involved in the transcriptional regulation of dosage compensation in Drosophila.</title>
        <authorList>
            <person name="Mendjan S."/>
            <person name="Taipale M."/>
            <person name="Kind J."/>
            <person name="Holz H."/>
            <person name="Gebhardt P."/>
            <person name="Schelder M."/>
            <person name="Vermeulen M."/>
            <person name="Buscaino A."/>
            <person name="Duncan K."/>
            <person name="Mueller J."/>
            <person name="Wilm M."/>
            <person name="Stunnenberg H.G."/>
            <person name="Saumweber H."/>
            <person name="Akhtar A."/>
        </authorList>
    </citation>
    <scope>IDENTIFICATION IN THE NSL COMPLEX</scope>
</reference>
<reference key="10">
    <citation type="journal article" date="2008" name="Proc. Natl. Acad. Sci. U.S.A.">
        <title>A quantitative atlas of mitotic phosphorylation.</title>
        <authorList>
            <person name="Dephoure N."/>
            <person name="Zhou C."/>
            <person name="Villen J."/>
            <person name="Beausoleil S.A."/>
            <person name="Bakalarski C.E."/>
            <person name="Elledge S.J."/>
            <person name="Gygi S.P."/>
        </authorList>
    </citation>
    <scope>PHOSPHORYLATION [LARGE SCALE ANALYSIS] AT SER-523 AND SER-540</scope>
    <scope>IDENTIFICATION BY MASS SPECTROMETRY [LARGE SCALE ANALYSIS]</scope>
    <source>
        <tissue>Cervix carcinoma</tissue>
    </source>
</reference>
<reference key="11">
    <citation type="journal article" date="2009" name="Anal. Chem.">
        <title>Lys-N and trypsin cover complementary parts of the phosphoproteome in a refined SCX-based approach.</title>
        <authorList>
            <person name="Gauci S."/>
            <person name="Helbig A.O."/>
            <person name="Slijper M."/>
            <person name="Krijgsveld J."/>
            <person name="Heck A.J."/>
            <person name="Mohammed S."/>
        </authorList>
    </citation>
    <scope>IDENTIFICATION BY MASS SPECTROMETRY [LARGE SCALE ANALYSIS]</scope>
</reference>
<reference key="12">
    <citation type="journal article" date="2009" name="Sci. Signal.">
        <title>Quantitative phosphoproteomic analysis of T cell receptor signaling reveals system-wide modulation of protein-protein interactions.</title>
        <authorList>
            <person name="Mayya V."/>
            <person name="Lundgren D.H."/>
            <person name="Hwang S.-I."/>
            <person name="Rezaul K."/>
            <person name="Wu L."/>
            <person name="Eng J.K."/>
            <person name="Rodionov V."/>
            <person name="Han D.K."/>
        </authorList>
    </citation>
    <scope>IDENTIFICATION BY MASS SPECTROMETRY [LARGE SCALE ANALYSIS]</scope>
    <source>
        <tissue>Leukemic T-cell</tissue>
    </source>
</reference>
<reference key="13">
    <citation type="journal article" date="2010" name="J. Biol. Chem.">
        <title>Subunit composition and substrate specificity of a MOF-containing histone acetyltransferase distinct from the male-specific lethal (MSL) complex.</title>
        <authorList>
            <person name="Cai Y."/>
            <person name="Jin J."/>
            <person name="Swanson S.K."/>
            <person name="Cole M.D."/>
            <person name="Choi S.H."/>
            <person name="Florens L."/>
            <person name="Washburn M.P."/>
            <person name="Conaway J.W."/>
            <person name="Conaway R.C."/>
        </authorList>
    </citation>
    <scope>FUNCTION IN HISTONE H4 ACETYLATION</scope>
    <scope>IDENTIFICATION IN NSL COMPLEX</scope>
    <scope>SUBCELLULAR LOCATION</scope>
</reference>
<reference key="14">
    <citation type="journal article" date="2013" name="J. Proteome Res.">
        <title>Toward a comprehensive characterization of a human cancer cell phosphoproteome.</title>
        <authorList>
            <person name="Zhou H."/>
            <person name="Di Palma S."/>
            <person name="Preisinger C."/>
            <person name="Peng M."/>
            <person name="Polat A.N."/>
            <person name="Heck A.J."/>
            <person name="Mohammed S."/>
        </authorList>
    </citation>
    <scope>PHOSPHORYLATION [LARGE SCALE ANALYSIS] AT SER-773</scope>
    <scope>IDENTIFICATION BY MASS SPECTROMETRY [LARGE SCALE ANALYSIS]</scope>
    <source>
        <tissue>Cervix carcinoma</tissue>
        <tissue>Erythroleukemia</tissue>
    </source>
</reference>
<reference key="15">
    <citation type="journal article" date="2015" name="Nat. Commun.">
        <title>An epigenetic regulator emerges as microtubule minus-end binding and stabilizing factor in mitosis.</title>
        <authorList>
            <person name="Meunier S."/>
            <person name="Shvedunova M."/>
            <person name="Van Nguyen N."/>
            <person name="Avila L."/>
            <person name="Vernos I."/>
            <person name="Akhtar A."/>
        </authorList>
    </citation>
    <scope>FUNCTION</scope>
    <scope>SUBCELLULAR LOCATION</scope>
    <scope>DEVELOPMENTAL STAGE</scope>
</reference>
<reference key="16">
    <citation type="journal article" date="2016" name="Cell">
        <title>MOF acetyl transferase regulates transcription and respiration in mitochondria.</title>
        <authorList>
            <person name="Chatterjee A."/>
            <person name="Seyfferth J."/>
            <person name="Lucci J."/>
            <person name="Gilsbach R."/>
            <person name="Preissl S."/>
            <person name="Boettinger L."/>
            <person name="Maartensson C.U."/>
            <person name="Panhale A."/>
            <person name="Stehle T."/>
            <person name="Kretz O."/>
            <person name="Sahyoun A.H."/>
            <person name="Avilov S."/>
            <person name="Eimer S."/>
            <person name="Hein L."/>
            <person name="Pfanner N."/>
            <person name="Becker T."/>
            <person name="Akhtar A."/>
        </authorList>
    </citation>
    <scope>FUNCTION</scope>
    <scope>SUBCELLULAR LOCATION</scope>
    <scope>IDENTIFICATION IN NSL COMPLEX</scope>
</reference>
<reference key="17">
    <citation type="journal article" date="2021" name="Mol. Cell">
        <title>Complex-dependent histone acetyltransferase activity of KAT8 determines its role in transcription and cellular homeostasis.</title>
        <authorList>
            <person name="Radzisheuskaya A."/>
            <person name="Shliaha P.V."/>
            <person name="Grinev V.V."/>
            <person name="Shlyueva D."/>
            <person name="Damhofer H."/>
            <person name="Koche R."/>
            <person name="Gorshkov V."/>
            <person name="Kovalchuk S."/>
            <person name="Zhan Y."/>
            <person name="Rodriguez K.L."/>
            <person name="Johnstone A.L."/>
            <person name="Keogh M.C."/>
            <person name="Hendrickson R.C."/>
            <person name="Jensen O.N."/>
            <person name="Helin K."/>
        </authorList>
    </citation>
    <scope>FUNCTION</scope>
    <scope>IDENTIFICATION IN NSL COMPLEX</scope>
</reference>
<name>KANL3_HUMAN</name>
<proteinExistence type="evidence at protein level"/>
<feature type="chain" id="PRO_0000416242" description="KAT8 regulatory NSL complex subunit 3">
    <location>
        <begin position="1"/>
        <end position="904"/>
    </location>
</feature>
<feature type="region of interest" description="Disordered" evidence="2">
    <location>
        <begin position="476"/>
        <end position="563"/>
    </location>
</feature>
<feature type="region of interest" description="Disordered" evidence="2">
    <location>
        <begin position="608"/>
        <end position="678"/>
    </location>
</feature>
<feature type="region of interest" description="Disordered" evidence="2">
    <location>
        <begin position="697"/>
        <end position="719"/>
    </location>
</feature>
<feature type="region of interest" description="Disordered" evidence="2">
    <location>
        <begin position="762"/>
        <end position="782"/>
    </location>
</feature>
<feature type="region of interest" description="Disordered" evidence="2">
    <location>
        <begin position="869"/>
        <end position="904"/>
    </location>
</feature>
<feature type="compositionally biased region" description="Basic and acidic residues" evidence="2">
    <location>
        <begin position="476"/>
        <end position="511"/>
    </location>
</feature>
<feature type="compositionally biased region" description="Low complexity" evidence="2">
    <location>
        <begin position="512"/>
        <end position="550"/>
    </location>
</feature>
<feature type="compositionally biased region" description="Polar residues" evidence="2">
    <location>
        <begin position="551"/>
        <end position="562"/>
    </location>
</feature>
<feature type="compositionally biased region" description="Low complexity" evidence="2">
    <location>
        <begin position="700"/>
        <end position="719"/>
    </location>
</feature>
<feature type="compositionally biased region" description="Low complexity" evidence="2">
    <location>
        <begin position="879"/>
        <end position="904"/>
    </location>
</feature>
<feature type="modified residue" description="Phosphoserine" evidence="14">
    <location>
        <position position="523"/>
    </location>
</feature>
<feature type="modified residue" description="Phosphoserine" evidence="1">
    <location>
        <position position="536"/>
    </location>
</feature>
<feature type="modified residue" description="Phosphoserine" evidence="14">
    <location>
        <position position="540"/>
    </location>
</feature>
<feature type="modified residue" description="Phosphoserine" evidence="15">
    <location>
        <position position="773"/>
    </location>
</feature>
<feature type="splice variant" id="VSP_025324" description="In isoform 6." evidence="12">
    <location>
        <begin position="1"/>
        <end position="112"/>
    </location>
</feature>
<feature type="splice variant" id="VSP_025325" description="In isoform 4, isoform 5, isoform 7 and isoform 8." evidence="9 10 11">
    <location>
        <begin position="1"/>
        <end position="87"/>
    </location>
</feature>
<feature type="splice variant" id="VSP_025326" description="In isoform 6." evidence="12">
    <original>DADAPPPPEDWEEHVNR</original>
    <variation>MTLPHCHRLMLTHHLFW</variation>
    <location>
        <begin position="113"/>
        <end position="129"/>
    </location>
</feature>
<feature type="splice variant" id="VSP_025327" description="In isoform 7." evidence="10">
    <original>IPTLIDR</original>
    <variation>VILTFCG</variation>
    <location>
        <begin position="222"/>
        <end position="228"/>
    </location>
</feature>
<feature type="splice variant" id="VSP_025328" description="In isoform 7." evidence="10">
    <location>
        <begin position="229"/>
        <end position="904"/>
    </location>
</feature>
<feature type="splice variant" id="VSP_025329" description="In isoform 3, isoform 4, isoform 5, isoform 6 and isoform 8." evidence="9 10 11 12">
    <location>
        <begin position="581"/>
        <end position="606"/>
    </location>
</feature>
<feature type="splice variant" id="VSP_025330" description="In isoform 8." evidence="9">
    <original>GSKTSKR</original>
    <variation>VYSWFHH</variation>
    <location>
        <begin position="637"/>
        <end position="643"/>
    </location>
</feature>
<feature type="splice variant" id="VSP_025331" description="In isoform 8." evidence="9">
    <location>
        <begin position="644"/>
        <end position="904"/>
    </location>
</feature>
<feature type="splice variant" id="VSP_025332" description="In isoform 5 and isoform 6." evidence="9 12">
    <location>
        <begin position="671"/>
        <end position="672"/>
    </location>
</feature>
<feature type="splice variant" id="VSP_025333" description="In isoform 2." evidence="8">
    <location>
        <begin position="781"/>
        <end position="904"/>
    </location>
</feature>
<feature type="sequence variant" id="VAR_032268" description="In dbSNP:rs34406082.">
    <original>V</original>
    <variation>I</variation>
    <location>
        <position position="707"/>
    </location>
</feature>
<feature type="sequence conflict" description="In Ref. 4; BAA91437." evidence="13" ref="4">
    <original>D</original>
    <variation>G</variation>
    <location>
        <position position="529"/>
    </location>
</feature>
<feature type="sequence conflict" description="In Ref. 2; AAG33852 and 4; BAB14688." evidence="13" ref="2 4">
    <original>T</original>
    <variation>I</variation>
    <location>
        <position position="640"/>
    </location>
</feature>
<feature type="sequence conflict" description="In Ref. 2; AAG33852 and 4; BAB14688." evidence="13" ref="2 4">
    <original>P</original>
    <variation>S</variation>
    <location>
        <position position="660"/>
    </location>
</feature>
<feature type="sequence conflict" description="In Ref. 2; AAG33852 and 4; BAB14688." evidence="13" ref="2 4">
    <original>S</original>
    <variation>C</variation>
    <location>
        <position position="667"/>
    </location>
</feature>
<accession>Q9P2N6</accession>
<accession>A1L184</accession>
<accession>D3DXH3</accession>
<accession>D3DXH4</accession>
<accession>Q05BU4</accession>
<accession>Q6P3X2</accession>
<accession>Q6PJH6</accession>
<accession>Q86T19</accession>
<accession>Q96L64</accession>
<accession>Q9H0C9</accession>
<accession>Q9H8C9</accession>
<accession>Q9HAP8</accession>
<accession>Q9NWE5</accession>
<gene>
    <name type="primary">KANSL3</name>
    <name type="synonym">KIAA1310</name>
    <name type="synonym">NSL3</name>
    <name type="synonym">PRTD</name>
    <name type="synonym">SI1</name>
</gene>
<sequence>MAHRGGERDFQTSARRMGTSLLFQLSVHERELDLVFLDHSYAKPWSAHPDASSARPTRMLFVTPRRQHESTIESDVPIDVETVTSTPMPLYDNQKARSVMNECERHVIFARTDADAPPPPEDWEEHVNRTGWTMAQNKLFNKILKALQSDRLARLANEGACNEPVLRRVAVDKCARRVRQALASVSWDTKLIQWLHTTLVETLSLPMLAAYLDALQTLKGKIPTLIDRMLVSSNTKTGAAGAEALSLLLKRPWDPAVGVLSHNKPSKLPGSPLILIASSGPSSSVFPTSRRHRFWQSQLSCLGKVIPVATHLLNNGSGVGVLQCLEHMIGAVRSKVLEIHSHFPHKPIILIGWNTGALVACHVSVMEYVTAVVCLGFPLLTVDGPRGDVDDPLLDMKTPVLFVIGQNSLQCHPEAMEDFREKIRAENSLVVVGGADDNLRISKAKKKSEGLTQSMVDRCIQDEIVDFLTGVLTRAEGHMGSEPRDQDAEKKKKPRDVARRDLAFEVPERGSRPASPAAKLPASPSGSEDLSSVSSSPTSSPKTKVTTVTSAQKSSQIGSSQLLKRHVQRTEAVLTHKQAQAQFAAFLKQNMLVRKALPPGTSSCLFVPISSEPPEEGEKEDLRVQLKRHHPSSPLPGSKTSKRPKIKVSLISQGDTAGGPCAPSQGSAPEAAGGKPITMTLGQASAGAKELTGLLTTAKSSSSEGGVSASPVPSVVSSSTAPSALHTLQSRLVATSPGSSLPGATSASSLLQGLSFSLQDISSKTSGLPANPSPGPAPQATSVKLPTPMQSLGAITTGTSTIVRTIPVATTLSSLGATPGGKPTAIHQLLTNGGLAKLASSLPGLAQISNQASGLKVPTTITLTLRGQPSRITTLSPMGSGAAPSEESSSQVLPSSSQRLPPAP</sequence>
<evidence type="ECO:0000250" key="1">
    <source>
        <dbReference type="UniProtKB" id="A2RSY1"/>
    </source>
</evidence>
<evidence type="ECO:0000256" key="2">
    <source>
        <dbReference type="SAM" id="MobiDB-lite"/>
    </source>
</evidence>
<evidence type="ECO:0000269" key="3">
    <source>
    </source>
</evidence>
<evidence type="ECO:0000269" key="4">
    <source>
    </source>
</evidence>
<evidence type="ECO:0000269" key="5">
    <source>
    </source>
</evidence>
<evidence type="ECO:0000269" key="6">
    <source>
    </source>
</evidence>
<evidence type="ECO:0000269" key="7">
    <source>
    </source>
</evidence>
<evidence type="ECO:0000303" key="8">
    <source>
    </source>
</evidence>
<evidence type="ECO:0000303" key="9">
    <source>
    </source>
</evidence>
<evidence type="ECO:0000303" key="10">
    <source>
    </source>
</evidence>
<evidence type="ECO:0000303" key="11">
    <source ref="1"/>
</evidence>
<evidence type="ECO:0000303" key="12">
    <source ref="2"/>
</evidence>
<evidence type="ECO:0000305" key="13"/>
<evidence type="ECO:0007744" key="14">
    <source>
    </source>
</evidence>
<evidence type="ECO:0007744" key="15">
    <source>
    </source>
</evidence>
<dbReference type="EMBL" id="AY050169">
    <property type="protein sequence ID" value="AAL13159.1"/>
    <property type="molecule type" value="mRNA"/>
</dbReference>
<dbReference type="EMBL" id="AF311326">
    <property type="protein sequence ID" value="AAG33852.1"/>
    <property type="molecule type" value="mRNA"/>
</dbReference>
<dbReference type="EMBL" id="AB037731">
    <property type="protein sequence ID" value="BAA92548.1"/>
    <property type="status" value="ALT_INIT"/>
    <property type="molecule type" value="mRNA"/>
</dbReference>
<dbReference type="EMBL" id="AK000943">
    <property type="protein sequence ID" value="BAA91437.1"/>
    <property type="molecule type" value="mRNA"/>
</dbReference>
<dbReference type="EMBL" id="AK023813">
    <property type="protein sequence ID" value="BAB14688.1"/>
    <property type="molecule type" value="mRNA"/>
</dbReference>
<dbReference type="EMBL" id="AC079754">
    <property type="protein sequence ID" value="AAX88890.1"/>
    <property type="molecule type" value="Genomic_DNA"/>
</dbReference>
<dbReference type="EMBL" id="CH471207">
    <property type="protein sequence ID" value="EAW71349.1"/>
    <property type="molecule type" value="Genomic_DNA"/>
</dbReference>
<dbReference type="EMBL" id="CH471207">
    <property type="protein sequence ID" value="EAW71350.1"/>
    <property type="molecule type" value="Genomic_DNA"/>
</dbReference>
<dbReference type="EMBL" id="CH471207">
    <property type="protein sequence ID" value="EAW71352.1"/>
    <property type="molecule type" value="Genomic_DNA"/>
</dbReference>
<dbReference type="EMBL" id="CH471207">
    <property type="protein sequence ID" value="EAW71357.1"/>
    <property type="molecule type" value="Genomic_DNA"/>
</dbReference>
<dbReference type="EMBL" id="CH471207">
    <property type="protein sequence ID" value="EAW71358.1"/>
    <property type="molecule type" value="Genomic_DNA"/>
</dbReference>
<dbReference type="EMBL" id="BC015469">
    <property type="protein sequence ID" value="AAH15469.1"/>
    <property type="status" value="ALT_SEQ"/>
    <property type="molecule type" value="mRNA"/>
</dbReference>
<dbReference type="EMBL" id="BC032746">
    <property type="protein sequence ID" value="AAH32746.1"/>
    <property type="molecule type" value="mRNA"/>
</dbReference>
<dbReference type="EMBL" id="BC051763">
    <property type="protein sequence ID" value="AAH51763.1"/>
    <property type="molecule type" value="mRNA"/>
</dbReference>
<dbReference type="EMBL" id="BC063792">
    <property type="protein sequence ID" value="AAH63792.1"/>
    <property type="molecule type" value="mRNA"/>
</dbReference>
<dbReference type="EMBL" id="BC127820">
    <property type="protein sequence ID" value="AAI27821.1"/>
    <property type="status" value="ALT_SEQ"/>
    <property type="molecule type" value="mRNA"/>
</dbReference>
<dbReference type="EMBL" id="AL136849">
    <property type="protein sequence ID" value="CAB66783.2"/>
    <property type="molecule type" value="mRNA"/>
</dbReference>
<dbReference type="CCDS" id="CCDS46361.1">
    <molecule id="Q9P2N6-3"/>
</dbReference>
<dbReference type="CCDS" id="CCDS92814.1">
    <molecule id="Q9P2N6-1"/>
</dbReference>
<dbReference type="RefSeq" id="NP_001108488.1">
    <molecule id="Q9P2N6-3"/>
    <property type="nucleotide sequence ID" value="NM_001115016.3"/>
</dbReference>
<dbReference type="RefSeq" id="NP_001336186.1">
    <molecule id="Q9P2N6-1"/>
    <property type="nucleotide sequence ID" value="NM_001349257.2"/>
</dbReference>
<dbReference type="RefSeq" id="XP_005264041.1">
    <property type="nucleotide sequence ID" value="XM_005263984.1"/>
</dbReference>
<dbReference type="RefSeq" id="XP_047300968.1">
    <molecule id="Q9P2N6-3"/>
    <property type="nucleotide sequence ID" value="XM_047445012.1"/>
</dbReference>
<dbReference type="RefSeq" id="XP_047300969.1">
    <molecule id="Q9P2N6-3"/>
    <property type="nucleotide sequence ID" value="XM_047445013.1"/>
</dbReference>
<dbReference type="RefSeq" id="XP_047300971.1">
    <molecule id="Q9P2N6-3"/>
    <property type="nucleotide sequence ID" value="XM_047445015.1"/>
</dbReference>
<dbReference type="RefSeq" id="XP_047300974.1">
    <molecule id="Q9P2N6-3"/>
    <property type="nucleotide sequence ID" value="XM_047445018.1"/>
</dbReference>
<dbReference type="RefSeq" id="XP_054198895.1">
    <molecule id="Q9P2N6-3"/>
    <property type="nucleotide sequence ID" value="XM_054342920.1"/>
</dbReference>
<dbReference type="RefSeq" id="XP_054198896.1">
    <molecule id="Q9P2N6-3"/>
    <property type="nucleotide sequence ID" value="XM_054342921.1"/>
</dbReference>
<dbReference type="RefSeq" id="XP_054198897.1">
    <molecule id="Q9P2N6-3"/>
    <property type="nucleotide sequence ID" value="XM_054342922.1"/>
</dbReference>
<dbReference type="RefSeq" id="XP_054198898.1">
    <molecule id="Q9P2N6-3"/>
    <property type="nucleotide sequence ID" value="XM_054342923.1"/>
</dbReference>
<dbReference type="SMR" id="Q9P2N6"/>
<dbReference type="BioGRID" id="120811">
    <property type="interactions" value="89"/>
</dbReference>
<dbReference type="ComplexPortal" id="CPX-809">
    <property type="entry name" value="NSL histone acetyltransferase complex"/>
</dbReference>
<dbReference type="CORUM" id="Q9P2N6"/>
<dbReference type="FunCoup" id="Q9P2N6">
    <property type="interactions" value="2427"/>
</dbReference>
<dbReference type="IntAct" id="Q9P2N6">
    <property type="interactions" value="47"/>
</dbReference>
<dbReference type="MINT" id="Q9P2N6"/>
<dbReference type="STRING" id="9606.ENSP00000396749"/>
<dbReference type="DrugBank" id="DB03467">
    <property type="generic name" value="Naringenin"/>
</dbReference>
<dbReference type="ESTHER" id="human-KANSL3">
    <property type="family name" value="NLS3-Tex30"/>
</dbReference>
<dbReference type="MoonProt" id="Q9P2N6"/>
<dbReference type="GlyConnect" id="2906">
    <property type="glycosylation" value="1 O-GlcNAc glycan (1 site)"/>
</dbReference>
<dbReference type="GlyCosmos" id="Q9P2N6">
    <property type="glycosylation" value="9 sites, 1 glycan"/>
</dbReference>
<dbReference type="GlyGen" id="Q9P2N6">
    <property type="glycosylation" value="30 sites, 1 O-linked glycan (29 sites)"/>
</dbReference>
<dbReference type="iPTMnet" id="Q9P2N6"/>
<dbReference type="PhosphoSitePlus" id="Q9P2N6"/>
<dbReference type="SwissPalm" id="Q9P2N6"/>
<dbReference type="BioMuta" id="KANSL3"/>
<dbReference type="DMDM" id="147646907"/>
<dbReference type="jPOST" id="Q9P2N6"/>
<dbReference type="MassIVE" id="Q9P2N6"/>
<dbReference type="PaxDb" id="9606-ENSP00000396749"/>
<dbReference type="PeptideAtlas" id="Q9P2N6"/>
<dbReference type="ProteomicsDB" id="83859">
    <molecule id="Q9P2N6-1"/>
</dbReference>
<dbReference type="ProteomicsDB" id="83860">
    <molecule id="Q9P2N6-2"/>
</dbReference>
<dbReference type="ProteomicsDB" id="83861">
    <molecule id="Q9P2N6-3"/>
</dbReference>
<dbReference type="ProteomicsDB" id="83862">
    <molecule id="Q9P2N6-4"/>
</dbReference>
<dbReference type="ProteomicsDB" id="83863">
    <molecule id="Q9P2N6-5"/>
</dbReference>
<dbReference type="ProteomicsDB" id="83864">
    <molecule id="Q9P2N6-6"/>
</dbReference>
<dbReference type="ProteomicsDB" id="83865">
    <molecule id="Q9P2N6-7"/>
</dbReference>
<dbReference type="ProteomicsDB" id="83866">
    <molecule id="Q9P2N6-8"/>
</dbReference>
<dbReference type="Pumba" id="Q9P2N6"/>
<dbReference type="Antibodypedia" id="32468">
    <property type="antibodies" value="109 antibodies from 20 providers"/>
</dbReference>
<dbReference type="DNASU" id="55683"/>
<dbReference type="Ensembl" id="ENST00000420155.5">
    <molecule id="Q9P2N6-2"/>
    <property type="protein sequence ID" value="ENSP00000414426.1"/>
    <property type="gene ID" value="ENSG00000114982.19"/>
</dbReference>
<dbReference type="Ensembl" id="ENST00000431828.6">
    <molecule id="Q9P2N6-3"/>
    <property type="protein sequence ID" value="ENSP00000396749.1"/>
    <property type="gene ID" value="ENSG00000114982.19"/>
</dbReference>
<dbReference type="Ensembl" id="ENST00000666923.1">
    <molecule id="Q9P2N6-1"/>
    <property type="protein sequence ID" value="ENSP00000499674.1"/>
    <property type="gene ID" value="ENSG00000114982.19"/>
</dbReference>
<dbReference type="GeneID" id="55683"/>
<dbReference type="KEGG" id="hsa:55683"/>
<dbReference type="MANE-Select" id="ENST00000431828.6">
    <molecule id="Q9P2N6-3"/>
    <property type="protein sequence ID" value="ENSP00000396749.1"/>
    <property type="RefSeq nucleotide sequence ID" value="NM_001115016.3"/>
    <property type="RefSeq protein sequence ID" value="NP_001108488.1"/>
</dbReference>
<dbReference type="UCSC" id="uc002swn.6">
    <molecule id="Q9P2N6-1"/>
    <property type="organism name" value="human"/>
</dbReference>
<dbReference type="AGR" id="HGNC:25473"/>
<dbReference type="CTD" id="55683"/>
<dbReference type="DisGeNET" id="55683"/>
<dbReference type="GeneCards" id="KANSL3"/>
<dbReference type="HGNC" id="HGNC:25473">
    <property type="gene designation" value="KANSL3"/>
</dbReference>
<dbReference type="HPA" id="ENSG00000114982">
    <property type="expression patterns" value="Low tissue specificity"/>
</dbReference>
<dbReference type="MIM" id="617742">
    <property type="type" value="gene"/>
</dbReference>
<dbReference type="neXtProt" id="NX_Q9P2N6"/>
<dbReference type="OpenTargets" id="ENSG00000114982"/>
<dbReference type="PharmGKB" id="PA162393058"/>
<dbReference type="VEuPathDB" id="HostDB:ENSG00000114982"/>
<dbReference type="eggNOG" id="KOG3253">
    <property type="taxonomic scope" value="Eukaryota"/>
</dbReference>
<dbReference type="GeneTree" id="ENSGT00390000007636"/>
<dbReference type="HOGENOM" id="CLU_009783_0_0_1"/>
<dbReference type="InParanoid" id="Q9P2N6"/>
<dbReference type="OMA" id="WEEHVNX"/>
<dbReference type="OrthoDB" id="6415022at2759"/>
<dbReference type="PAN-GO" id="Q9P2N6">
    <property type="GO annotations" value="5 GO annotations based on evolutionary models"/>
</dbReference>
<dbReference type="PhylomeDB" id="Q9P2N6"/>
<dbReference type="TreeFam" id="TF323466"/>
<dbReference type="PathwayCommons" id="Q9P2N6"/>
<dbReference type="Reactome" id="R-HSA-3214847">
    <property type="pathway name" value="HATs acetylate histones"/>
</dbReference>
<dbReference type="Reactome" id="R-HSA-9772755">
    <property type="pathway name" value="Formation of WDR5-containing histone-modifying complexes"/>
</dbReference>
<dbReference type="SignaLink" id="Q9P2N6"/>
<dbReference type="SIGNOR" id="Q9P2N6"/>
<dbReference type="BioGRID-ORCS" id="55683">
    <property type="hits" value="684 hits in 1159 CRISPR screens"/>
</dbReference>
<dbReference type="ChiTaRS" id="KANSL3">
    <property type="organism name" value="human"/>
</dbReference>
<dbReference type="GeneWiki" id="FLJ10081"/>
<dbReference type="GenomeRNAi" id="55683"/>
<dbReference type="Pharos" id="Q9P2N6">
    <property type="development level" value="Tbio"/>
</dbReference>
<dbReference type="PRO" id="PR:Q9P2N6"/>
<dbReference type="Proteomes" id="UP000005640">
    <property type="component" value="Chromosome 2"/>
</dbReference>
<dbReference type="RNAct" id="Q9P2N6">
    <property type="molecule type" value="protein"/>
</dbReference>
<dbReference type="Bgee" id="ENSG00000114982">
    <property type="expression patterns" value="Expressed in sperm and 188 other cell types or tissues"/>
</dbReference>
<dbReference type="ExpressionAtlas" id="Q9P2N6">
    <property type="expression patterns" value="baseline and differential"/>
</dbReference>
<dbReference type="GO" id="GO:0000123">
    <property type="term" value="C:histone acetyltransferase complex"/>
    <property type="evidence" value="ECO:0000314"/>
    <property type="project" value="UniProtKB"/>
</dbReference>
<dbReference type="GO" id="GO:0043231">
    <property type="term" value="C:intracellular membrane-bounded organelle"/>
    <property type="evidence" value="ECO:0000314"/>
    <property type="project" value="HPA"/>
</dbReference>
<dbReference type="GO" id="GO:0005739">
    <property type="term" value="C:mitochondrion"/>
    <property type="evidence" value="ECO:0000314"/>
    <property type="project" value="UniProtKB"/>
</dbReference>
<dbReference type="GO" id="GO:0044545">
    <property type="term" value="C:NSL complex"/>
    <property type="evidence" value="ECO:0000314"/>
    <property type="project" value="UniProtKB"/>
</dbReference>
<dbReference type="GO" id="GO:0005654">
    <property type="term" value="C:nucleoplasm"/>
    <property type="evidence" value="ECO:0000314"/>
    <property type="project" value="HPA"/>
</dbReference>
<dbReference type="GO" id="GO:0006325">
    <property type="term" value="P:chromatin organization"/>
    <property type="evidence" value="ECO:0007669"/>
    <property type="project" value="UniProtKB-KW"/>
</dbReference>
<dbReference type="GO" id="GO:0045893">
    <property type="term" value="P:positive regulation of DNA-templated transcription"/>
    <property type="evidence" value="ECO:0000303"/>
    <property type="project" value="ComplexPortal"/>
</dbReference>
<dbReference type="GO" id="GO:0045944">
    <property type="term" value="P:positive regulation of transcription by RNA polymerase II"/>
    <property type="evidence" value="ECO:0000318"/>
    <property type="project" value="GO_Central"/>
</dbReference>
<dbReference type="GO" id="GO:1903108">
    <property type="term" value="P:regulation of mitochondrial transcription"/>
    <property type="evidence" value="ECO:0000314"/>
    <property type="project" value="UniProtKB"/>
</dbReference>
<dbReference type="FunFam" id="3.40.50.1820:FF:000032">
    <property type="entry name" value="KAT8 regulatory NSL complex subunit 3 isoform X2"/>
    <property type="match status" value="1"/>
</dbReference>
<dbReference type="Gene3D" id="3.40.50.1820">
    <property type="entry name" value="alpha/beta hydrolase"/>
    <property type="match status" value="1"/>
</dbReference>
<dbReference type="InterPro" id="IPR029058">
    <property type="entry name" value="AB_hydrolase_fold"/>
</dbReference>
<dbReference type="InterPro" id="IPR046879">
    <property type="entry name" value="KANL3/Tex30_Abhydrolase"/>
</dbReference>
<dbReference type="InterPro" id="IPR056519">
    <property type="entry name" value="KANSL3_1st"/>
</dbReference>
<dbReference type="InterPro" id="IPR026555">
    <property type="entry name" value="NSL3/Tex30"/>
</dbReference>
<dbReference type="PANTHER" id="PTHR13136:SF16">
    <property type="entry name" value="KAT8 REGULATORY NSL COMPLEX SUBUNIT 3"/>
    <property type="match status" value="1"/>
</dbReference>
<dbReference type="PANTHER" id="PTHR13136">
    <property type="entry name" value="TESTIS DEVELOPMENT PROTEIN PRTD"/>
    <property type="match status" value="1"/>
</dbReference>
<dbReference type="Pfam" id="PF20408">
    <property type="entry name" value="Abhydrolase_11"/>
    <property type="match status" value="1"/>
</dbReference>
<dbReference type="Pfam" id="PF23154">
    <property type="entry name" value="KANSL3_1st"/>
    <property type="match status" value="1"/>
</dbReference>
<dbReference type="SUPFAM" id="SSF53474">
    <property type="entry name" value="alpha/beta-Hydrolases"/>
    <property type="match status" value="1"/>
</dbReference>
<comment type="function">
    <text evidence="1 4 5 6 7">Non-catalytic component of the NSL histone acetyltransferase complex, a multiprotein complex that mediates histone H4 acetylation at 'Lys-5'- and 'Lys-8' (H4K5ac and H4K8ac) at transcription start sites and promotes transcription initiation (PubMed:20018852, PubMed:33657400). The NSL complex also acts as a regulator of gene expression in mitochondria (PubMed:27768893). Within the NSL complex, KANSL3 is required to promote KAT8 association with mitochondrial DNA (PubMed:27768893). Required for transcription of intraciliary transport genes in both ciliated and non-ciliated cells (By similarity). This is necessary for cilium assembly in ciliated cells and for organization of the microtubule cytoskeleton in non-ciliated cells (By similarity). Also required within the NSL complex to maintain nuclear architecture stability by promoting KAT8-mediated acetylation of lamin LMNA (By similarity). Plays an essential role in spindle assembly during mitosis (PubMed:26243146). Acts as a microtubule minus-end binding protein which stabilizes microtubules and promotes their assembly (PubMed:26243146). Indispensable during early embryonic development where it is required for proper lineage specification and maintenance during peri-implantation development and is essential for implantation (By similarity).</text>
</comment>
<comment type="subunit">
    <text evidence="3 4 6 7">Component of the NSL complex at least composed of KAT8/MOF, KANSL1, KANSL2, KANSL3, MCRS1, PHF20, OGT1/OGT, WDR5 and HCFC1.</text>
</comment>
<comment type="interaction">
    <interactant intactId="EBI-395317">
        <id>Q9P2N6</id>
    </interactant>
    <interactant intactId="EBI-2560802">
        <id>Q9BVI0</id>
        <label>PHF20</label>
    </interactant>
    <organismsDiffer>false</organismsDiffer>
    <experiments>2</experiments>
</comment>
<comment type="subcellular location">
    <subcellularLocation>
        <location evidence="4 5">Nucleus</location>
    </subcellularLocation>
    <subcellularLocation>
        <location evidence="6">Mitochondrion</location>
    </subcellularLocation>
    <subcellularLocation>
        <location evidence="5">Cytoplasm</location>
        <location evidence="5">Cytoskeleton</location>
        <location evidence="5">Spindle pole</location>
    </subcellularLocation>
    <text evidence="5">Concentrated in the nucleus during interphase but displays a marked relocalization to the spindle poles during mitosis.</text>
</comment>
<comment type="alternative products">
    <event type="alternative splicing"/>
    <isoform>
        <id>Q9P2N6-1</id>
        <name>1</name>
        <sequence type="displayed"/>
    </isoform>
    <isoform>
        <id>Q9P2N6-2</id>
        <name>2</name>
        <sequence type="described" ref="VSP_025333"/>
    </isoform>
    <isoform>
        <id>Q9P2N6-3</id>
        <name>3</name>
        <sequence type="described" ref="VSP_025329"/>
    </isoform>
    <isoform>
        <id>Q9P2N6-4</id>
        <name>4</name>
        <sequence type="described" ref="VSP_025325 VSP_025329"/>
    </isoform>
    <isoform>
        <id>Q9P2N6-5</id>
        <name>5</name>
        <sequence type="described" ref="VSP_025325 VSP_025329 VSP_025332"/>
    </isoform>
    <isoform>
        <id>Q9P2N6-6</id>
        <name>6</name>
        <sequence type="described" ref="VSP_025324 VSP_025326 VSP_025329 VSP_025332"/>
    </isoform>
    <isoform>
        <id>Q9P2N6-7</id>
        <name>7</name>
        <sequence type="described" ref="VSP_025325 VSP_025327 VSP_025328"/>
    </isoform>
    <isoform>
        <id>Q9P2N6-8</id>
        <name>8</name>
        <sequence type="described" ref="VSP_025325 VSP_025329 VSP_025330 VSP_025331"/>
    </isoform>
</comment>
<comment type="developmental stage">
    <text evidence="5">Levels remain constant throughout all cell cycle stages (at protein level).</text>
</comment>
<comment type="miscellaneous">
    <molecule>Isoform 2</molecule>
    <text evidence="13">May be produced at very low levels due to a premature stop codon in the mRNA, leading to nonsense-mediated mRNA decay.</text>
</comment>
<comment type="sequence caution" evidence="13">
    <conflict type="miscellaneous discrepancy">
        <sequence resource="EMBL-CDS" id="AAH15469"/>
    </conflict>
    <text>Contaminating sequence. Potential poly-A sequence.</text>
</comment>
<comment type="sequence caution" evidence="13">
    <conflict type="miscellaneous discrepancy">
        <sequence resource="EMBL-CDS" id="AAI27821"/>
    </conflict>
    <text>Contaminating sequence. Sequence of unknown origin in the C-terminal part.</text>
</comment>
<comment type="sequence caution" evidence="13">
    <conflict type="erroneous initiation">
        <sequence resource="EMBL-CDS" id="BAA92548"/>
    </conflict>
    <text>Extended N-terminus.</text>
</comment>
<organism>
    <name type="scientific">Homo sapiens</name>
    <name type="common">Human</name>
    <dbReference type="NCBI Taxonomy" id="9606"/>
    <lineage>
        <taxon>Eukaryota</taxon>
        <taxon>Metazoa</taxon>
        <taxon>Chordata</taxon>
        <taxon>Craniata</taxon>
        <taxon>Vertebrata</taxon>
        <taxon>Euteleostomi</taxon>
        <taxon>Mammalia</taxon>
        <taxon>Eutheria</taxon>
        <taxon>Euarchontoglires</taxon>
        <taxon>Primates</taxon>
        <taxon>Haplorrhini</taxon>
        <taxon>Catarrhini</taxon>
        <taxon>Hominidae</taxon>
        <taxon>Homo</taxon>
    </lineage>
</organism>
<protein>
    <recommendedName>
        <fullName>KAT8 regulatory NSL complex subunit 3</fullName>
    </recommendedName>
    <alternativeName>
        <fullName>NSL complex protein NSL3</fullName>
    </alternativeName>
    <alternativeName>
        <fullName>Non-specific lethal 3 homolog</fullName>
    </alternativeName>
    <alternativeName>
        <fullName>Serum inhibited-related protein</fullName>
    </alternativeName>
    <alternativeName>
        <fullName>Testis development protein PRTD</fullName>
    </alternativeName>
</protein>
<keyword id="KW-0025">Alternative splicing</keyword>
<keyword id="KW-0156">Chromatin regulator</keyword>
<keyword id="KW-0963">Cytoplasm</keyword>
<keyword id="KW-0206">Cytoskeleton</keyword>
<keyword id="KW-0493">Microtubule</keyword>
<keyword id="KW-0496">Mitochondrion</keyword>
<keyword id="KW-0539">Nucleus</keyword>
<keyword id="KW-0597">Phosphoprotein</keyword>
<keyword id="KW-1267">Proteomics identification</keyword>
<keyword id="KW-1185">Reference proteome</keyword>